<feature type="chain" id="PRO_1000064848" description="UPF0283 membrane protein YcjF">
    <location>
        <begin position="1"/>
        <end position="353"/>
    </location>
</feature>
<feature type="transmembrane region" description="Helical" evidence="1">
    <location>
        <begin position="70"/>
        <end position="90"/>
    </location>
</feature>
<feature type="transmembrane region" description="Helical" evidence="1">
    <location>
        <begin position="100"/>
        <end position="120"/>
    </location>
</feature>
<feature type="transmembrane region" description="Helical" evidence="1">
    <location>
        <begin position="213"/>
        <end position="233"/>
    </location>
</feature>
<feature type="region of interest" description="Disordered" evidence="2">
    <location>
        <begin position="1"/>
        <end position="35"/>
    </location>
</feature>
<feature type="compositionally biased region" description="Basic and acidic residues" evidence="2">
    <location>
        <begin position="1"/>
        <end position="19"/>
    </location>
</feature>
<name>YCJF_SALPA</name>
<protein>
    <recommendedName>
        <fullName evidence="1">UPF0283 membrane protein YcjF</fullName>
    </recommendedName>
</protein>
<proteinExistence type="inferred from homology"/>
<keyword id="KW-0997">Cell inner membrane</keyword>
<keyword id="KW-1003">Cell membrane</keyword>
<keyword id="KW-0472">Membrane</keyword>
<keyword id="KW-0812">Transmembrane</keyword>
<keyword id="KW-1133">Transmembrane helix</keyword>
<gene>
    <name evidence="1" type="primary">ycjF</name>
    <name type="ordered locus">SPA1200</name>
</gene>
<sequence>MSEPLKPRIDFAEPLKEEPTSAFKAQQTFSEAESRTFAPAAIDERPEDEGVAEAAVDAALRPKRSLWRKMVMGGLALFGASVVGQGVQWTMNAWQTQDWVALGGCAAGALIVGAGVGSVVTEWRRLWRLRQRAHERDEARELLHSHSVGKGRAFCEKLAQQAGIDQSHPVLQRWYAAIHETQNDREIVGLYANLVQPVLDAQARREISRFAAESTLMIAVSPLALVDMAFIAWRNLRLINRIATLYGIELGYYSRLRLFRLVLLNIAFAGASELVREVGMDWMSQDLAARLSTRAAQGIGAGLLTARLGIKAMELCRPLPWIDNDKPRLGDFRRQLIGQLKETLQKSKSSPEK</sequence>
<comment type="subcellular location">
    <subcellularLocation>
        <location evidence="1">Cell inner membrane</location>
        <topology evidence="1">Multi-pass membrane protein</topology>
    </subcellularLocation>
</comment>
<comment type="similarity">
    <text evidence="1">Belongs to the UPF0283 family.</text>
</comment>
<accession>Q5PHP3</accession>
<evidence type="ECO:0000255" key="1">
    <source>
        <dbReference type="HAMAP-Rule" id="MF_01085"/>
    </source>
</evidence>
<evidence type="ECO:0000256" key="2">
    <source>
        <dbReference type="SAM" id="MobiDB-lite"/>
    </source>
</evidence>
<reference key="1">
    <citation type="journal article" date="2004" name="Nat. Genet.">
        <title>Comparison of genome degradation in Paratyphi A and Typhi, human-restricted serovars of Salmonella enterica that cause typhoid.</title>
        <authorList>
            <person name="McClelland M."/>
            <person name="Sanderson K.E."/>
            <person name="Clifton S.W."/>
            <person name="Latreille P."/>
            <person name="Porwollik S."/>
            <person name="Sabo A."/>
            <person name="Meyer R."/>
            <person name="Bieri T."/>
            <person name="Ozersky P."/>
            <person name="McLellan M."/>
            <person name="Harkins C.R."/>
            <person name="Wang C."/>
            <person name="Nguyen C."/>
            <person name="Berghoff A."/>
            <person name="Elliott G."/>
            <person name="Kohlberg S."/>
            <person name="Strong C."/>
            <person name="Du F."/>
            <person name="Carter J."/>
            <person name="Kremizki C."/>
            <person name="Layman D."/>
            <person name="Leonard S."/>
            <person name="Sun H."/>
            <person name="Fulton L."/>
            <person name="Nash W."/>
            <person name="Miner T."/>
            <person name="Minx P."/>
            <person name="Delehaunty K."/>
            <person name="Fronick C."/>
            <person name="Magrini V."/>
            <person name="Nhan M."/>
            <person name="Warren W."/>
            <person name="Florea L."/>
            <person name="Spieth J."/>
            <person name="Wilson R.K."/>
        </authorList>
    </citation>
    <scope>NUCLEOTIDE SEQUENCE [LARGE SCALE GENOMIC DNA]</scope>
    <source>
        <strain>ATCC 9150 / SARB42</strain>
    </source>
</reference>
<organism>
    <name type="scientific">Salmonella paratyphi A (strain ATCC 9150 / SARB42)</name>
    <dbReference type="NCBI Taxonomy" id="295319"/>
    <lineage>
        <taxon>Bacteria</taxon>
        <taxon>Pseudomonadati</taxon>
        <taxon>Pseudomonadota</taxon>
        <taxon>Gammaproteobacteria</taxon>
        <taxon>Enterobacterales</taxon>
        <taxon>Enterobacteriaceae</taxon>
        <taxon>Salmonella</taxon>
    </lineage>
</organism>
<dbReference type="EMBL" id="CP000026">
    <property type="protein sequence ID" value="AAV77157.1"/>
    <property type="molecule type" value="Genomic_DNA"/>
</dbReference>
<dbReference type="RefSeq" id="WP_001294474.1">
    <property type="nucleotide sequence ID" value="NC_006511.1"/>
</dbReference>
<dbReference type="SMR" id="Q5PHP3"/>
<dbReference type="KEGG" id="spt:SPA1200"/>
<dbReference type="HOGENOM" id="CLU_057693_2_0_6"/>
<dbReference type="Proteomes" id="UP000008185">
    <property type="component" value="Chromosome"/>
</dbReference>
<dbReference type="GO" id="GO:0005886">
    <property type="term" value="C:plasma membrane"/>
    <property type="evidence" value="ECO:0007669"/>
    <property type="project" value="UniProtKB-SubCell"/>
</dbReference>
<dbReference type="HAMAP" id="MF_01085">
    <property type="entry name" value="UPF0283"/>
    <property type="match status" value="1"/>
</dbReference>
<dbReference type="InterPro" id="IPR021147">
    <property type="entry name" value="DUF697"/>
</dbReference>
<dbReference type="InterPro" id="IPR006507">
    <property type="entry name" value="UPF0283"/>
</dbReference>
<dbReference type="NCBIfam" id="TIGR01620">
    <property type="entry name" value="hyp_HI0043"/>
    <property type="match status" value="1"/>
</dbReference>
<dbReference type="PANTHER" id="PTHR39342">
    <property type="entry name" value="UPF0283 MEMBRANE PROTEIN YCJF"/>
    <property type="match status" value="1"/>
</dbReference>
<dbReference type="PANTHER" id="PTHR39342:SF1">
    <property type="entry name" value="UPF0283 MEMBRANE PROTEIN YCJF"/>
    <property type="match status" value="1"/>
</dbReference>
<dbReference type="Pfam" id="PF05128">
    <property type="entry name" value="DUF697"/>
    <property type="match status" value="1"/>
</dbReference>